<organism>
    <name type="scientific">Rickettsia typhi (strain ATCC VR-144 / Wilmington)</name>
    <dbReference type="NCBI Taxonomy" id="257363"/>
    <lineage>
        <taxon>Bacteria</taxon>
        <taxon>Pseudomonadati</taxon>
        <taxon>Pseudomonadota</taxon>
        <taxon>Alphaproteobacteria</taxon>
        <taxon>Rickettsiales</taxon>
        <taxon>Rickettsiaceae</taxon>
        <taxon>Rickettsieae</taxon>
        <taxon>Rickettsia</taxon>
        <taxon>typhus group</taxon>
    </lineage>
</organism>
<reference key="1">
    <citation type="journal article" date="2004" name="J. Bacteriol.">
        <title>Complete genome sequence of Rickettsia typhi and comparison with sequences of other Rickettsiae.</title>
        <authorList>
            <person name="McLeod M.P."/>
            <person name="Qin X."/>
            <person name="Karpathy S.E."/>
            <person name="Gioia J."/>
            <person name="Highlander S.K."/>
            <person name="Fox G.E."/>
            <person name="McNeill T.Z."/>
            <person name="Jiang H."/>
            <person name="Muzny D."/>
            <person name="Jacob L.S."/>
            <person name="Hawes A.C."/>
            <person name="Sodergren E."/>
            <person name="Gill R."/>
            <person name="Hume J."/>
            <person name="Morgan M."/>
            <person name="Fan G."/>
            <person name="Amin A.G."/>
            <person name="Gibbs R.A."/>
            <person name="Hong C."/>
            <person name="Yu X.-J."/>
            <person name="Walker D.H."/>
            <person name="Weinstock G.M."/>
        </authorList>
    </citation>
    <scope>NUCLEOTIDE SEQUENCE [LARGE SCALE GENOMIC DNA]</scope>
    <source>
        <strain>ATCC VR-144 / Wilmington</strain>
    </source>
</reference>
<accession>Q68XD4</accession>
<evidence type="ECO:0000255" key="1">
    <source>
        <dbReference type="HAMAP-Rule" id="MF_00532"/>
    </source>
</evidence>
<evidence type="ECO:0000305" key="2"/>
<comment type="similarity">
    <text evidence="1">Belongs to the universal ribosomal protein uS9 family.</text>
</comment>
<keyword id="KW-0687">Ribonucleoprotein</keyword>
<keyword id="KW-0689">Ribosomal protein</keyword>
<protein>
    <recommendedName>
        <fullName evidence="1">Small ribosomal subunit protein uS9</fullName>
    </recommendedName>
    <alternativeName>
        <fullName evidence="2">30S ribosomal protein S9</fullName>
    </alternativeName>
</protein>
<feature type="chain" id="PRO_0000278004" description="Small ribosomal subunit protein uS9">
    <location>
        <begin position="1"/>
        <end position="161"/>
    </location>
</feature>
<name>RS9_RICTY</name>
<proteinExistence type="inferred from homology"/>
<gene>
    <name evidence="1" type="primary">rpsI</name>
    <name type="ordered locus">RT0226</name>
</gene>
<dbReference type="EMBL" id="AE017197">
    <property type="protein sequence ID" value="AAU03708.1"/>
    <property type="molecule type" value="Genomic_DNA"/>
</dbReference>
<dbReference type="RefSeq" id="WP_011190694.1">
    <property type="nucleotide sequence ID" value="NC_006142.1"/>
</dbReference>
<dbReference type="SMR" id="Q68XD4"/>
<dbReference type="KEGG" id="rty:RT0226"/>
<dbReference type="eggNOG" id="COG0103">
    <property type="taxonomic scope" value="Bacteria"/>
</dbReference>
<dbReference type="HOGENOM" id="CLU_046483_2_0_5"/>
<dbReference type="OrthoDB" id="9803965at2"/>
<dbReference type="Proteomes" id="UP000000604">
    <property type="component" value="Chromosome"/>
</dbReference>
<dbReference type="GO" id="GO:0022627">
    <property type="term" value="C:cytosolic small ribosomal subunit"/>
    <property type="evidence" value="ECO:0007669"/>
    <property type="project" value="TreeGrafter"/>
</dbReference>
<dbReference type="GO" id="GO:0003723">
    <property type="term" value="F:RNA binding"/>
    <property type="evidence" value="ECO:0007669"/>
    <property type="project" value="TreeGrafter"/>
</dbReference>
<dbReference type="GO" id="GO:0003735">
    <property type="term" value="F:structural constituent of ribosome"/>
    <property type="evidence" value="ECO:0007669"/>
    <property type="project" value="InterPro"/>
</dbReference>
<dbReference type="GO" id="GO:0006412">
    <property type="term" value="P:translation"/>
    <property type="evidence" value="ECO:0007669"/>
    <property type="project" value="UniProtKB-UniRule"/>
</dbReference>
<dbReference type="FunFam" id="3.30.230.10:FF:000001">
    <property type="entry name" value="30S ribosomal protein S9"/>
    <property type="match status" value="1"/>
</dbReference>
<dbReference type="Gene3D" id="3.30.230.10">
    <property type="match status" value="1"/>
</dbReference>
<dbReference type="HAMAP" id="MF_00532_B">
    <property type="entry name" value="Ribosomal_uS9_B"/>
    <property type="match status" value="1"/>
</dbReference>
<dbReference type="InterPro" id="IPR020568">
    <property type="entry name" value="Ribosomal_Su5_D2-typ_SF"/>
</dbReference>
<dbReference type="InterPro" id="IPR000754">
    <property type="entry name" value="Ribosomal_uS9"/>
</dbReference>
<dbReference type="InterPro" id="IPR023035">
    <property type="entry name" value="Ribosomal_uS9_bac/plastid"/>
</dbReference>
<dbReference type="InterPro" id="IPR020574">
    <property type="entry name" value="Ribosomal_uS9_CS"/>
</dbReference>
<dbReference type="InterPro" id="IPR014721">
    <property type="entry name" value="Ribsml_uS5_D2-typ_fold_subgr"/>
</dbReference>
<dbReference type="NCBIfam" id="NF001099">
    <property type="entry name" value="PRK00132.1"/>
    <property type="match status" value="1"/>
</dbReference>
<dbReference type="PANTHER" id="PTHR21569">
    <property type="entry name" value="RIBOSOMAL PROTEIN S9"/>
    <property type="match status" value="1"/>
</dbReference>
<dbReference type="PANTHER" id="PTHR21569:SF1">
    <property type="entry name" value="SMALL RIBOSOMAL SUBUNIT PROTEIN US9M"/>
    <property type="match status" value="1"/>
</dbReference>
<dbReference type="Pfam" id="PF00380">
    <property type="entry name" value="Ribosomal_S9"/>
    <property type="match status" value="1"/>
</dbReference>
<dbReference type="SUPFAM" id="SSF54211">
    <property type="entry name" value="Ribosomal protein S5 domain 2-like"/>
    <property type="match status" value="1"/>
</dbReference>
<dbReference type="PROSITE" id="PS00360">
    <property type="entry name" value="RIBOSOMAL_S9"/>
    <property type="match status" value="1"/>
</dbReference>
<sequence>MTELKIKTEKVVKQLTKESLKPVLKVPKAKIDNASQFYATGKRKNAIARVWLKVGKGKIVVNNKILNQYFPSETYIKTILQPFLLTKTIDQYDVICTVRGGGISGQKGAILHGISKALDKSAPCFHAILRKGGLLTRDSRVVERKKYGQRKARKKTQFSKR</sequence>